<keyword id="KW-0687">Ribonucleoprotein</keyword>
<keyword id="KW-0689">Ribosomal protein</keyword>
<proteinExistence type="inferred from homology"/>
<protein>
    <recommendedName>
        <fullName evidence="1">Large ribosomal subunit protein bL19</fullName>
    </recommendedName>
    <alternativeName>
        <fullName evidence="2">50S ribosomal protein L19</fullName>
    </alternativeName>
</protein>
<feature type="chain" id="PRO_0000163531" description="Large ribosomal subunit protein bL19">
    <location>
        <begin position="1"/>
        <end position="116"/>
    </location>
</feature>
<sequence>MTNHKLIEAVTKSQLRTDLPSFRPGDTLRVHVRIIEGTRERIQVFEGVVIKRRGGGVSETFTVRKISSGVGVERTFPLHTPKIEKIEVKRRGKVRRAKLYYLRSLRGKAARIQEIR</sequence>
<dbReference type="EMBL" id="BX571856">
    <property type="protein sequence ID" value="CAG40219.1"/>
    <property type="molecule type" value="Genomic_DNA"/>
</dbReference>
<dbReference type="RefSeq" id="WP_000181404.1">
    <property type="nucleotide sequence ID" value="NC_002952.2"/>
</dbReference>
<dbReference type="SMR" id="Q6GHJ4"/>
<dbReference type="GeneID" id="98345556"/>
<dbReference type="KEGG" id="sar:SAR1217"/>
<dbReference type="HOGENOM" id="CLU_103507_2_1_9"/>
<dbReference type="Proteomes" id="UP000000596">
    <property type="component" value="Chromosome"/>
</dbReference>
<dbReference type="GO" id="GO:0022625">
    <property type="term" value="C:cytosolic large ribosomal subunit"/>
    <property type="evidence" value="ECO:0007669"/>
    <property type="project" value="TreeGrafter"/>
</dbReference>
<dbReference type="GO" id="GO:0003735">
    <property type="term" value="F:structural constituent of ribosome"/>
    <property type="evidence" value="ECO:0007669"/>
    <property type="project" value="InterPro"/>
</dbReference>
<dbReference type="GO" id="GO:0006412">
    <property type="term" value="P:translation"/>
    <property type="evidence" value="ECO:0007669"/>
    <property type="project" value="UniProtKB-UniRule"/>
</dbReference>
<dbReference type="FunFam" id="2.30.30.790:FF:000001">
    <property type="entry name" value="50S ribosomal protein L19"/>
    <property type="match status" value="1"/>
</dbReference>
<dbReference type="Gene3D" id="2.30.30.790">
    <property type="match status" value="1"/>
</dbReference>
<dbReference type="HAMAP" id="MF_00402">
    <property type="entry name" value="Ribosomal_bL19"/>
    <property type="match status" value="1"/>
</dbReference>
<dbReference type="InterPro" id="IPR001857">
    <property type="entry name" value="Ribosomal_bL19"/>
</dbReference>
<dbReference type="InterPro" id="IPR018257">
    <property type="entry name" value="Ribosomal_bL19_CS"/>
</dbReference>
<dbReference type="InterPro" id="IPR038657">
    <property type="entry name" value="Ribosomal_bL19_sf"/>
</dbReference>
<dbReference type="InterPro" id="IPR008991">
    <property type="entry name" value="Translation_prot_SH3-like_sf"/>
</dbReference>
<dbReference type="NCBIfam" id="TIGR01024">
    <property type="entry name" value="rplS_bact"/>
    <property type="match status" value="1"/>
</dbReference>
<dbReference type="PANTHER" id="PTHR15680:SF9">
    <property type="entry name" value="LARGE RIBOSOMAL SUBUNIT PROTEIN BL19M"/>
    <property type="match status" value="1"/>
</dbReference>
<dbReference type="PANTHER" id="PTHR15680">
    <property type="entry name" value="RIBOSOMAL PROTEIN L19"/>
    <property type="match status" value="1"/>
</dbReference>
<dbReference type="Pfam" id="PF01245">
    <property type="entry name" value="Ribosomal_L19"/>
    <property type="match status" value="1"/>
</dbReference>
<dbReference type="PIRSF" id="PIRSF002191">
    <property type="entry name" value="Ribosomal_L19"/>
    <property type="match status" value="1"/>
</dbReference>
<dbReference type="PRINTS" id="PR00061">
    <property type="entry name" value="RIBOSOMALL19"/>
</dbReference>
<dbReference type="SUPFAM" id="SSF50104">
    <property type="entry name" value="Translation proteins SH3-like domain"/>
    <property type="match status" value="1"/>
</dbReference>
<dbReference type="PROSITE" id="PS01015">
    <property type="entry name" value="RIBOSOMAL_L19"/>
    <property type="match status" value="1"/>
</dbReference>
<reference key="1">
    <citation type="journal article" date="2004" name="Proc. Natl. Acad. Sci. U.S.A.">
        <title>Complete genomes of two clinical Staphylococcus aureus strains: evidence for the rapid evolution of virulence and drug resistance.</title>
        <authorList>
            <person name="Holden M.T.G."/>
            <person name="Feil E.J."/>
            <person name="Lindsay J.A."/>
            <person name="Peacock S.J."/>
            <person name="Day N.P.J."/>
            <person name="Enright M.C."/>
            <person name="Foster T.J."/>
            <person name="Moore C.E."/>
            <person name="Hurst L."/>
            <person name="Atkin R."/>
            <person name="Barron A."/>
            <person name="Bason N."/>
            <person name="Bentley S.D."/>
            <person name="Chillingworth C."/>
            <person name="Chillingworth T."/>
            <person name="Churcher C."/>
            <person name="Clark L."/>
            <person name="Corton C."/>
            <person name="Cronin A."/>
            <person name="Doggett J."/>
            <person name="Dowd L."/>
            <person name="Feltwell T."/>
            <person name="Hance Z."/>
            <person name="Harris B."/>
            <person name="Hauser H."/>
            <person name="Holroyd S."/>
            <person name="Jagels K."/>
            <person name="James K.D."/>
            <person name="Lennard N."/>
            <person name="Line A."/>
            <person name="Mayes R."/>
            <person name="Moule S."/>
            <person name="Mungall K."/>
            <person name="Ormond D."/>
            <person name="Quail M.A."/>
            <person name="Rabbinowitsch E."/>
            <person name="Rutherford K.M."/>
            <person name="Sanders M."/>
            <person name="Sharp S."/>
            <person name="Simmonds M."/>
            <person name="Stevens K."/>
            <person name="Whitehead S."/>
            <person name="Barrell B.G."/>
            <person name="Spratt B.G."/>
            <person name="Parkhill J."/>
        </authorList>
    </citation>
    <scope>NUCLEOTIDE SEQUENCE [LARGE SCALE GENOMIC DNA]</scope>
    <source>
        <strain>MRSA252</strain>
    </source>
</reference>
<gene>
    <name evidence="1" type="primary">rplS</name>
    <name type="ordered locus">SAR1217</name>
</gene>
<organism>
    <name type="scientific">Staphylococcus aureus (strain MRSA252)</name>
    <dbReference type="NCBI Taxonomy" id="282458"/>
    <lineage>
        <taxon>Bacteria</taxon>
        <taxon>Bacillati</taxon>
        <taxon>Bacillota</taxon>
        <taxon>Bacilli</taxon>
        <taxon>Bacillales</taxon>
        <taxon>Staphylococcaceae</taxon>
        <taxon>Staphylococcus</taxon>
    </lineage>
</organism>
<evidence type="ECO:0000255" key="1">
    <source>
        <dbReference type="HAMAP-Rule" id="MF_00402"/>
    </source>
</evidence>
<evidence type="ECO:0000305" key="2"/>
<accession>Q6GHJ4</accession>
<comment type="function">
    <text evidence="1">This protein is located at the 30S-50S ribosomal subunit interface and may play a role in the structure and function of the aminoacyl-tRNA binding site.</text>
</comment>
<comment type="similarity">
    <text evidence="1">Belongs to the bacterial ribosomal protein bL19 family.</text>
</comment>
<name>RL19_STAAR</name>